<evidence type="ECO:0000255" key="1">
    <source>
        <dbReference type="HAMAP-Rule" id="MF_00186"/>
    </source>
</evidence>
<gene>
    <name evidence="1" type="primary">glpK</name>
    <name type="ordered locus">EcolC_4092</name>
</gene>
<accession>B1IVF3</accession>
<proteinExistence type="inferred from homology"/>
<dbReference type="EC" id="2.7.1.30" evidence="1"/>
<dbReference type="EMBL" id="CP000946">
    <property type="protein sequence ID" value="ACA79690.1"/>
    <property type="molecule type" value="Genomic_DNA"/>
</dbReference>
<dbReference type="RefSeq" id="WP_000136788.1">
    <property type="nucleotide sequence ID" value="NZ_MTFT01000008.1"/>
</dbReference>
<dbReference type="SMR" id="B1IVF3"/>
<dbReference type="GeneID" id="75169366"/>
<dbReference type="KEGG" id="ecl:EcolC_4092"/>
<dbReference type="HOGENOM" id="CLU_009281_2_3_6"/>
<dbReference type="UniPathway" id="UPA00618">
    <property type="reaction ID" value="UER00672"/>
</dbReference>
<dbReference type="GO" id="GO:0005829">
    <property type="term" value="C:cytosol"/>
    <property type="evidence" value="ECO:0007669"/>
    <property type="project" value="TreeGrafter"/>
</dbReference>
<dbReference type="GO" id="GO:0005524">
    <property type="term" value="F:ATP binding"/>
    <property type="evidence" value="ECO:0007669"/>
    <property type="project" value="UniProtKB-UniRule"/>
</dbReference>
<dbReference type="GO" id="GO:0004370">
    <property type="term" value="F:glycerol kinase activity"/>
    <property type="evidence" value="ECO:0000250"/>
    <property type="project" value="UniProtKB"/>
</dbReference>
<dbReference type="GO" id="GO:0046872">
    <property type="term" value="F:metal ion binding"/>
    <property type="evidence" value="ECO:0007669"/>
    <property type="project" value="UniProtKB-KW"/>
</dbReference>
<dbReference type="GO" id="GO:0019563">
    <property type="term" value="P:glycerol catabolic process"/>
    <property type="evidence" value="ECO:0007669"/>
    <property type="project" value="UniProtKB-UniRule"/>
</dbReference>
<dbReference type="GO" id="GO:0006071">
    <property type="term" value="P:glycerol metabolic process"/>
    <property type="evidence" value="ECO:0000250"/>
    <property type="project" value="UniProtKB"/>
</dbReference>
<dbReference type="GO" id="GO:0006072">
    <property type="term" value="P:glycerol-3-phosphate metabolic process"/>
    <property type="evidence" value="ECO:0007669"/>
    <property type="project" value="InterPro"/>
</dbReference>
<dbReference type="CDD" id="cd07786">
    <property type="entry name" value="FGGY_EcGK_like"/>
    <property type="match status" value="1"/>
</dbReference>
<dbReference type="FunFam" id="3.30.420.40:FF:000007">
    <property type="entry name" value="Glycerol kinase"/>
    <property type="match status" value="1"/>
</dbReference>
<dbReference type="FunFam" id="3.30.420.40:FF:000008">
    <property type="entry name" value="Glycerol kinase"/>
    <property type="match status" value="1"/>
</dbReference>
<dbReference type="Gene3D" id="3.30.420.40">
    <property type="match status" value="2"/>
</dbReference>
<dbReference type="HAMAP" id="MF_00186">
    <property type="entry name" value="Glycerol_kin"/>
    <property type="match status" value="1"/>
</dbReference>
<dbReference type="InterPro" id="IPR043129">
    <property type="entry name" value="ATPase_NBD"/>
</dbReference>
<dbReference type="InterPro" id="IPR000577">
    <property type="entry name" value="Carb_kinase_FGGY"/>
</dbReference>
<dbReference type="InterPro" id="IPR018483">
    <property type="entry name" value="Carb_kinase_FGGY_CS"/>
</dbReference>
<dbReference type="InterPro" id="IPR018485">
    <property type="entry name" value="FGGY_C"/>
</dbReference>
<dbReference type="InterPro" id="IPR018484">
    <property type="entry name" value="FGGY_N"/>
</dbReference>
<dbReference type="InterPro" id="IPR005999">
    <property type="entry name" value="Glycerol_kin"/>
</dbReference>
<dbReference type="NCBIfam" id="TIGR01311">
    <property type="entry name" value="glycerol_kin"/>
    <property type="match status" value="1"/>
</dbReference>
<dbReference type="NCBIfam" id="NF000756">
    <property type="entry name" value="PRK00047.1"/>
    <property type="match status" value="1"/>
</dbReference>
<dbReference type="PANTHER" id="PTHR10196:SF69">
    <property type="entry name" value="GLYCEROL KINASE"/>
    <property type="match status" value="1"/>
</dbReference>
<dbReference type="PANTHER" id="PTHR10196">
    <property type="entry name" value="SUGAR KINASE"/>
    <property type="match status" value="1"/>
</dbReference>
<dbReference type="Pfam" id="PF02782">
    <property type="entry name" value="FGGY_C"/>
    <property type="match status" value="1"/>
</dbReference>
<dbReference type="Pfam" id="PF00370">
    <property type="entry name" value="FGGY_N"/>
    <property type="match status" value="1"/>
</dbReference>
<dbReference type="PIRSF" id="PIRSF000538">
    <property type="entry name" value="GlpK"/>
    <property type="match status" value="1"/>
</dbReference>
<dbReference type="SUPFAM" id="SSF53067">
    <property type="entry name" value="Actin-like ATPase domain"/>
    <property type="match status" value="2"/>
</dbReference>
<dbReference type="PROSITE" id="PS00933">
    <property type="entry name" value="FGGY_KINASES_1"/>
    <property type="match status" value="1"/>
</dbReference>
<dbReference type="PROSITE" id="PS00445">
    <property type="entry name" value="FGGY_KINASES_2"/>
    <property type="match status" value="1"/>
</dbReference>
<feature type="chain" id="PRO_1000077417" description="Glycerol kinase">
    <location>
        <begin position="1"/>
        <end position="502"/>
    </location>
</feature>
<feature type="binding site" evidence="1">
    <location>
        <position position="14"/>
    </location>
    <ligand>
        <name>ADP</name>
        <dbReference type="ChEBI" id="CHEBI:456216"/>
    </ligand>
</feature>
<feature type="binding site" evidence="1">
    <location>
        <position position="14"/>
    </location>
    <ligand>
        <name>ATP</name>
        <dbReference type="ChEBI" id="CHEBI:30616"/>
    </ligand>
</feature>
<feature type="binding site" evidence="1">
    <location>
        <position position="14"/>
    </location>
    <ligand>
        <name>sn-glycerol 3-phosphate</name>
        <dbReference type="ChEBI" id="CHEBI:57597"/>
    </ligand>
</feature>
<feature type="binding site" evidence="1">
    <location>
        <position position="15"/>
    </location>
    <ligand>
        <name>ATP</name>
        <dbReference type="ChEBI" id="CHEBI:30616"/>
    </ligand>
</feature>
<feature type="binding site" evidence="1">
    <location>
        <position position="16"/>
    </location>
    <ligand>
        <name>ATP</name>
        <dbReference type="ChEBI" id="CHEBI:30616"/>
    </ligand>
</feature>
<feature type="binding site" evidence="1">
    <location>
        <position position="18"/>
    </location>
    <ligand>
        <name>ADP</name>
        <dbReference type="ChEBI" id="CHEBI:456216"/>
    </ligand>
</feature>
<feature type="binding site" evidence="1">
    <location>
        <position position="84"/>
    </location>
    <ligand>
        <name>glycerol</name>
        <dbReference type="ChEBI" id="CHEBI:17754"/>
    </ligand>
</feature>
<feature type="binding site" evidence="1">
    <location>
        <position position="84"/>
    </location>
    <ligand>
        <name>sn-glycerol 3-phosphate</name>
        <dbReference type="ChEBI" id="CHEBI:57597"/>
    </ligand>
</feature>
<feature type="binding site" evidence="1">
    <location>
        <position position="85"/>
    </location>
    <ligand>
        <name>glycerol</name>
        <dbReference type="ChEBI" id="CHEBI:17754"/>
    </ligand>
</feature>
<feature type="binding site" evidence="1">
    <location>
        <position position="85"/>
    </location>
    <ligand>
        <name>sn-glycerol 3-phosphate</name>
        <dbReference type="ChEBI" id="CHEBI:57597"/>
    </ligand>
</feature>
<feature type="binding site" evidence="1">
    <location>
        <position position="136"/>
    </location>
    <ligand>
        <name>glycerol</name>
        <dbReference type="ChEBI" id="CHEBI:17754"/>
    </ligand>
</feature>
<feature type="binding site" evidence="1">
    <location>
        <position position="136"/>
    </location>
    <ligand>
        <name>sn-glycerol 3-phosphate</name>
        <dbReference type="ChEBI" id="CHEBI:57597"/>
    </ligand>
</feature>
<feature type="binding site" evidence="1">
    <location>
        <position position="246"/>
    </location>
    <ligand>
        <name>glycerol</name>
        <dbReference type="ChEBI" id="CHEBI:17754"/>
    </ligand>
</feature>
<feature type="binding site" evidence="1">
    <location>
        <position position="246"/>
    </location>
    <ligand>
        <name>sn-glycerol 3-phosphate</name>
        <dbReference type="ChEBI" id="CHEBI:57597"/>
    </ligand>
</feature>
<feature type="binding site" evidence="1">
    <location>
        <position position="247"/>
    </location>
    <ligand>
        <name>glycerol</name>
        <dbReference type="ChEBI" id="CHEBI:17754"/>
    </ligand>
</feature>
<feature type="binding site" evidence="1">
    <location>
        <position position="268"/>
    </location>
    <ligand>
        <name>ADP</name>
        <dbReference type="ChEBI" id="CHEBI:456216"/>
    </ligand>
</feature>
<feature type="binding site" evidence="1">
    <location>
        <position position="268"/>
    </location>
    <ligand>
        <name>ATP</name>
        <dbReference type="ChEBI" id="CHEBI:30616"/>
    </ligand>
</feature>
<feature type="binding site" evidence="1">
    <location>
        <position position="311"/>
    </location>
    <ligand>
        <name>ADP</name>
        <dbReference type="ChEBI" id="CHEBI:456216"/>
    </ligand>
</feature>
<feature type="binding site" evidence="1">
    <location>
        <position position="311"/>
    </location>
    <ligand>
        <name>ATP</name>
        <dbReference type="ChEBI" id="CHEBI:30616"/>
    </ligand>
</feature>
<feature type="binding site" evidence="1">
    <location>
        <position position="315"/>
    </location>
    <ligand>
        <name>ATP</name>
        <dbReference type="ChEBI" id="CHEBI:30616"/>
    </ligand>
</feature>
<feature type="binding site" evidence="1">
    <location>
        <position position="412"/>
    </location>
    <ligand>
        <name>ADP</name>
        <dbReference type="ChEBI" id="CHEBI:456216"/>
    </ligand>
</feature>
<feature type="binding site" evidence="1">
    <location>
        <position position="412"/>
    </location>
    <ligand>
        <name>ATP</name>
        <dbReference type="ChEBI" id="CHEBI:30616"/>
    </ligand>
</feature>
<feature type="binding site" evidence="1">
    <location>
        <position position="416"/>
    </location>
    <ligand>
        <name>ADP</name>
        <dbReference type="ChEBI" id="CHEBI:456216"/>
    </ligand>
</feature>
<comment type="function">
    <text evidence="1">Key enzyme in the regulation of glycerol uptake and metabolism. Catalyzes the phosphorylation of glycerol to yield sn-glycerol 3-phosphate.</text>
</comment>
<comment type="catalytic activity">
    <reaction evidence="1">
        <text>glycerol + ATP = sn-glycerol 3-phosphate + ADP + H(+)</text>
        <dbReference type="Rhea" id="RHEA:21644"/>
        <dbReference type="ChEBI" id="CHEBI:15378"/>
        <dbReference type="ChEBI" id="CHEBI:17754"/>
        <dbReference type="ChEBI" id="CHEBI:30616"/>
        <dbReference type="ChEBI" id="CHEBI:57597"/>
        <dbReference type="ChEBI" id="CHEBI:456216"/>
        <dbReference type="EC" id="2.7.1.30"/>
    </reaction>
</comment>
<comment type="activity regulation">
    <text evidence="1">Activity of this regulatory enzyme is affected by several metabolites. Allosterically and non-competitively inhibited by fructose 1,6-bisphosphate (FBP) and unphosphorylated phosphocarrier protein EIIA-Glc (III-Glc), an integral component of the bacterial phosphotransferase (PTS) system.</text>
</comment>
<comment type="pathway">
    <text evidence="1">Polyol metabolism; glycerol degradation via glycerol kinase pathway; sn-glycerol 3-phosphate from glycerol: step 1/1.</text>
</comment>
<comment type="subunit">
    <text evidence="1">Homotetramer and homodimer (in equilibrium). Heterodimer with EIIA-Glc. Binds 1 zinc ion per glycerol kinase EIIA-Glc dimer. The zinc ion is important for dimerization.</text>
</comment>
<comment type="similarity">
    <text evidence="1">Belongs to the FGGY kinase family.</text>
</comment>
<name>GLPK_ECOLC</name>
<sequence length="502" mass="56231">MTEKKYIVALDQGTTSSRAVVMDHDANIISVSQREFEQIYPKPGWVEHDPMEIWATQSSTLVEVLAKADISSDQIAAIGITNQRETTIVWEKETGKPIYNAIVWQCRRTAEICEHLKRDGLEDYIRSNTGLVIDPYFSGTKVKWILDHVEGSRERARRGELLFGTVDTWLIWKMTQGRVHVTDYTNASRTMLFNIHTLDWDDKMLEVLDIPREMLPEVRRSSEVYGQTNIGGKGGTRIPISGIAGDQQAALFGQLCVKEGMAKNTYGTGCFMLMNTGEKAVKSENGLLTTIACGPTGEVNYALEGAVFMAGASIQWLRDEMKLINDAYDSEYFATKVQNTNGVYVVPAFTGLGAPYWDPYARGAIFGLTRGVNANHIIRATLESIAYQTRDVLEAMQADSGIRLHALRVDGGAVANNFLMQFQSDILGTRVERPEVREVTALGAAYLAGLAVGFWQNLDELQEKAVIEREFRPGIETTERNYRYAGWKKAVKRAMAWEEHDE</sequence>
<protein>
    <recommendedName>
        <fullName evidence="1">Glycerol kinase</fullName>
        <ecNumber evidence="1">2.7.1.30</ecNumber>
    </recommendedName>
    <alternativeName>
        <fullName evidence="1">ATP:glycerol 3-phosphotransferase</fullName>
    </alternativeName>
    <alternativeName>
        <fullName evidence="1">Glycerokinase</fullName>
        <shortName evidence="1">GK</shortName>
    </alternativeName>
</protein>
<keyword id="KW-0021">Allosteric enzyme</keyword>
<keyword id="KW-0067">ATP-binding</keyword>
<keyword id="KW-0319">Glycerol metabolism</keyword>
<keyword id="KW-0418">Kinase</keyword>
<keyword id="KW-0479">Metal-binding</keyword>
<keyword id="KW-0547">Nucleotide-binding</keyword>
<keyword id="KW-0808">Transferase</keyword>
<keyword id="KW-0862">Zinc</keyword>
<reference key="1">
    <citation type="submission" date="2008-02" db="EMBL/GenBank/DDBJ databases">
        <title>Complete sequence of Escherichia coli C str. ATCC 8739.</title>
        <authorList>
            <person name="Copeland A."/>
            <person name="Lucas S."/>
            <person name="Lapidus A."/>
            <person name="Glavina del Rio T."/>
            <person name="Dalin E."/>
            <person name="Tice H."/>
            <person name="Bruce D."/>
            <person name="Goodwin L."/>
            <person name="Pitluck S."/>
            <person name="Kiss H."/>
            <person name="Brettin T."/>
            <person name="Detter J.C."/>
            <person name="Han C."/>
            <person name="Kuske C.R."/>
            <person name="Schmutz J."/>
            <person name="Larimer F."/>
            <person name="Land M."/>
            <person name="Hauser L."/>
            <person name="Kyrpides N."/>
            <person name="Mikhailova N."/>
            <person name="Ingram L."/>
            <person name="Richardson P."/>
        </authorList>
    </citation>
    <scope>NUCLEOTIDE SEQUENCE [LARGE SCALE GENOMIC DNA]</scope>
    <source>
        <strain>ATCC 8739 / DSM 1576 / NBRC 3972 / NCIMB 8545 / WDCM 00012 / Crooks</strain>
    </source>
</reference>
<organism>
    <name type="scientific">Escherichia coli (strain ATCC 8739 / DSM 1576 / NBRC 3972 / NCIMB 8545 / WDCM 00012 / Crooks)</name>
    <dbReference type="NCBI Taxonomy" id="481805"/>
    <lineage>
        <taxon>Bacteria</taxon>
        <taxon>Pseudomonadati</taxon>
        <taxon>Pseudomonadota</taxon>
        <taxon>Gammaproteobacteria</taxon>
        <taxon>Enterobacterales</taxon>
        <taxon>Enterobacteriaceae</taxon>
        <taxon>Escherichia</taxon>
    </lineage>
</organism>